<organism>
    <name type="scientific">Burkholderia mallei (strain ATCC 23344)</name>
    <dbReference type="NCBI Taxonomy" id="243160"/>
    <lineage>
        <taxon>Bacteria</taxon>
        <taxon>Pseudomonadati</taxon>
        <taxon>Pseudomonadota</taxon>
        <taxon>Betaproteobacteria</taxon>
        <taxon>Burkholderiales</taxon>
        <taxon>Burkholderiaceae</taxon>
        <taxon>Burkholderia</taxon>
        <taxon>pseudomallei group</taxon>
    </lineage>
</organism>
<reference key="1">
    <citation type="journal article" date="2004" name="Proc. Natl. Acad. Sci. U.S.A.">
        <title>Structural flexibility in the Burkholderia mallei genome.</title>
        <authorList>
            <person name="Nierman W.C."/>
            <person name="DeShazer D."/>
            <person name="Kim H.S."/>
            <person name="Tettelin H."/>
            <person name="Nelson K.E."/>
            <person name="Feldblyum T.V."/>
            <person name="Ulrich R.L."/>
            <person name="Ronning C.M."/>
            <person name="Brinkac L.M."/>
            <person name="Daugherty S.C."/>
            <person name="Davidsen T.D."/>
            <person name="DeBoy R.T."/>
            <person name="Dimitrov G."/>
            <person name="Dodson R.J."/>
            <person name="Durkin A.S."/>
            <person name="Gwinn M.L."/>
            <person name="Haft D.H."/>
            <person name="Khouri H.M."/>
            <person name="Kolonay J.F."/>
            <person name="Madupu R."/>
            <person name="Mohammoud Y."/>
            <person name="Nelson W.C."/>
            <person name="Radune D."/>
            <person name="Romero C.M."/>
            <person name="Sarria S."/>
            <person name="Selengut J."/>
            <person name="Shamblin C."/>
            <person name="Sullivan S.A."/>
            <person name="White O."/>
            <person name="Yu Y."/>
            <person name="Zafar N."/>
            <person name="Zhou L."/>
            <person name="Fraser C.M."/>
        </authorList>
    </citation>
    <scope>NUCLEOTIDE SEQUENCE [LARGE SCALE GENOMIC DNA]</scope>
    <source>
        <strain>ATCC 23344</strain>
    </source>
</reference>
<proteinExistence type="inferred from homology"/>
<accession>Q62GR7</accession>
<evidence type="ECO:0000255" key="1">
    <source>
        <dbReference type="HAMAP-Rule" id="MF_01658"/>
    </source>
</evidence>
<keyword id="KW-1003">Cell membrane</keyword>
<keyword id="KW-0408">Iron</keyword>
<keyword id="KW-0472">Membrane</keyword>
<keyword id="KW-0479">Metal-binding</keyword>
<keyword id="KW-0503">Monooxygenase</keyword>
<keyword id="KW-0560">Oxidoreductase</keyword>
<keyword id="KW-1185">Reference proteome</keyword>
<keyword id="KW-0831">Ubiquinone biosynthesis</keyword>
<protein>
    <recommendedName>
        <fullName evidence="1">3-demethoxyubiquinol 3-hydroxylase</fullName>
        <shortName evidence="1">DMQ hydroxylase</shortName>
        <ecNumber evidence="1">1.14.99.60</ecNumber>
    </recommendedName>
    <alternativeName>
        <fullName evidence="1">2-nonaprenyl-3-methyl-6-methoxy-1,4-benzoquinol hydroxylase</fullName>
    </alternativeName>
</protein>
<feature type="chain" id="PRO_0000338666" description="3-demethoxyubiquinol 3-hydroxylase">
    <location>
        <begin position="1"/>
        <end position="208"/>
    </location>
</feature>
<feature type="binding site" evidence="1">
    <location>
        <position position="57"/>
    </location>
    <ligand>
        <name>Fe cation</name>
        <dbReference type="ChEBI" id="CHEBI:24875"/>
        <label>1</label>
    </ligand>
</feature>
<feature type="binding site" evidence="1">
    <location>
        <position position="87"/>
    </location>
    <ligand>
        <name>Fe cation</name>
        <dbReference type="ChEBI" id="CHEBI:24875"/>
        <label>1</label>
    </ligand>
</feature>
<feature type="binding site" evidence="1">
    <location>
        <position position="87"/>
    </location>
    <ligand>
        <name>Fe cation</name>
        <dbReference type="ChEBI" id="CHEBI:24875"/>
        <label>2</label>
    </ligand>
</feature>
<feature type="binding site" evidence="1">
    <location>
        <position position="90"/>
    </location>
    <ligand>
        <name>Fe cation</name>
        <dbReference type="ChEBI" id="CHEBI:24875"/>
        <label>1</label>
    </ligand>
</feature>
<feature type="binding site" evidence="1">
    <location>
        <position position="139"/>
    </location>
    <ligand>
        <name>Fe cation</name>
        <dbReference type="ChEBI" id="CHEBI:24875"/>
        <label>2</label>
    </ligand>
</feature>
<feature type="binding site" evidence="1">
    <location>
        <position position="171"/>
    </location>
    <ligand>
        <name>Fe cation</name>
        <dbReference type="ChEBI" id="CHEBI:24875"/>
        <label>1</label>
    </ligand>
</feature>
<feature type="binding site" evidence="1">
    <location>
        <position position="171"/>
    </location>
    <ligand>
        <name>Fe cation</name>
        <dbReference type="ChEBI" id="CHEBI:24875"/>
        <label>2</label>
    </ligand>
</feature>
<feature type="binding site" evidence="1">
    <location>
        <position position="174"/>
    </location>
    <ligand>
        <name>Fe cation</name>
        <dbReference type="ChEBI" id="CHEBI:24875"/>
        <label>2</label>
    </ligand>
</feature>
<sequence>MVFDELITEFDRGLRSIAGVSRMSRPVPKPAAAAPAELSAAERKHAAGLMRVNHVGEVCAQALYQAQKLTTSSAGLKEMFEHAAREEEDHLAWTAHRLKDLDSRPSLLNPLWYAGALAIGVVAGRLGDKVSLGFMAETERQVESHLDGHLSELPAADAESRAIVEQMRADEVKHGKSATDAGGIELPMPARMLMRAASKVMTSTAYYL</sequence>
<dbReference type="EC" id="1.14.99.60" evidence="1"/>
<dbReference type="EMBL" id="CP000010">
    <property type="protein sequence ID" value="AAU49653.1"/>
    <property type="molecule type" value="Genomic_DNA"/>
</dbReference>
<dbReference type="RefSeq" id="WP_004194286.1">
    <property type="nucleotide sequence ID" value="NC_006348.1"/>
</dbReference>
<dbReference type="RefSeq" id="YP_104104.1">
    <property type="nucleotide sequence ID" value="NC_006348.1"/>
</dbReference>
<dbReference type="SMR" id="Q62GR7"/>
<dbReference type="GeneID" id="92980253"/>
<dbReference type="KEGG" id="bma:BMA2561"/>
<dbReference type="PATRIC" id="fig|243160.12.peg.2638"/>
<dbReference type="eggNOG" id="COG2941">
    <property type="taxonomic scope" value="Bacteria"/>
</dbReference>
<dbReference type="HOGENOM" id="CLU_088601_0_0_4"/>
<dbReference type="UniPathway" id="UPA00232"/>
<dbReference type="Proteomes" id="UP000006693">
    <property type="component" value="Chromosome 1"/>
</dbReference>
<dbReference type="GO" id="GO:0005886">
    <property type="term" value="C:plasma membrane"/>
    <property type="evidence" value="ECO:0007669"/>
    <property type="project" value="UniProtKB-SubCell"/>
</dbReference>
<dbReference type="GO" id="GO:0008682">
    <property type="term" value="F:3-demethoxyubiquinol 3-hydroxylase activity"/>
    <property type="evidence" value="ECO:0007669"/>
    <property type="project" value="UniProtKB-EC"/>
</dbReference>
<dbReference type="GO" id="GO:0046872">
    <property type="term" value="F:metal ion binding"/>
    <property type="evidence" value="ECO:0007669"/>
    <property type="project" value="UniProtKB-KW"/>
</dbReference>
<dbReference type="GO" id="GO:0006744">
    <property type="term" value="P:ubiquinone biosynthetic process"/>
    <property type="evidence" value="ECO:0007669"/>
    <property type="project" value="UniProtKB-UniRule"/>
</dbReference>
<dbReference type="CDD" id="cd01042">
    <property type="entry name" value="DMQH"/>
    <property type="match status" value="1"/>
</dbReference>
<dbReference type="Gene3D" id="1.20.1260.10">
    <property type="match status" value="1"/>
</dbReference>
<dbReference type="HAMAP" id="MF_01658">
    <property type="entry name" value="COQ7"/>
    <property type="match status" value="1"/>
</dbReference>
<dbReference type="InterPro" id="IPR047809">
    <property type="entry name" value="COQ7_proteobact"/>
</dbReference>
<dbReference type="InterPro" id="IPR012347">
    <property type="entry name" value="Ferritin-like"/>
</dbReference>
<dbReference type="InterPro" id="IPR009078">
    <property type="entry name" value="Ferritin-like_SF"/>
</dbReference>
<dbReference type="InterPro" id="IPR011566">
    <property type="entry name" value="Ubq_synth_Coq7"/>
</dbReference>
<dbReference type="NCBIfam" id="NF033656">
    <property type="entry name" value="DMQ_monoox_COQ7"/>
    <property type="match status" value="1"/>
</dbReference>
<dbReference type="PANTHER" id="PTHR11237:SF4">
    <property type="entry name" value="5-DEMETHOXYUBIQUINONE HYDROXYLASE, MITOCHONDRIAL"/>
    <property type="match status" value="1"/>
</dbReference>
<dbReference type="PANTHER" id="PTHR11237">
    <property type="entry name" value="COENZYME Q10 BIOSYNTHESIS PROTEIN 7"/>
    <property type="match status" value="1"/>
</dbReference>
<dbReference type="Pfam" id="PF03232">
    <property type="entry name" value="COQ7"/>
    <property type="match status" value="1"/>
</dbReference>
<dbReference type="SUPFAM" id="SSF47240">
    <property type="entry name" value="Ferritin-like"/>
    <property type="match status" value="1"/>
</dbReference>
<gene>
    <name evidence="1" type="primary">coq7</name>
    <name type="ordered locus">BMA2561</name>
</gene>
<comment type="function">
    <text evidence="1">Catalyzes the hydroxylation of 2-nonaprenyl-3-methyl-6-methoxy-1,4-benzoquinol during ubiquinone biosynthesis.</text>
</comment>
<comment type="catalytic activity">
    <reaction evidence="1">
        <text>a 5-methoxy-2-methyl-3-(all-trans-polyprenyl)benzene-1,4-diol + AH2 + O2 = a 3-demethylubiquinol + A + H2O</text>
        <dbReference type="Rhea" id="RHEA:50908"/>
        <dbReference type="Rhea" id="RHEA-COMP:10859"/>
        <dbReference type="Rhea" id="RHEA-COMP:10914"/>
        <dbReference type="ChEBI" id="CHEBI:13193"/>
        <dbReference type="ChEBI" id="CHEBI:15377"/>
        <dbReference type="ChEBI" id="CHEBI:15379"/>
        <dbReference type="ChEBI" id="CHEBI:17499"/>
        <dbReference type="ChEBI" id="CHEBI:84167"/>
        <dbReference type="ChEBI" id="CHEBI:84422"/>
        <dbReference type="EC" id="1.14.99.60"/>
    </reaction>
</comment>
<comment type="cofactor">
    <cofactor evidence="1">
        <name>Fe cation</name>
        <dbReference type="ChEBI" id="CHEBI:24875"/>
    </cofactor>
    <text evidence="1">Binds 2 iron ions per subunit.</text>
</comment>
<comment type="pathway">
    <text evidence="1">Cofactor biosynthesis; ubiquinone biosynthesis.</text>
</comment>
<comment type="subcellular location">
    <subcellularLocation>
        <location evidence="1">Cell membrane</location>
        <topology evidence="1">Peripheral membrane protein</topology>
    </subcellularLocation>
</comment>
<comment type="similarity">
    <text evidence="1">Belongs to the COQ7 family.</text>
</comment>
<name>COQ7_BURMA</name>